<reference key="1">
    <citation type="submission" date="2006-02" db="EMBL/GenBank/DDBJ databases">
        <authorList>
            <person name="Rourke K.M."/>
            <person name="Kohn C.W."/>
            <person name="Rosol T.J."/>
            <person name="Toribio R.E."/>
        </authorList>
    </citation>
    <scope>NUCLEOTIDE SEQUENCE [MRNA]</scope>
</reference>
<reference key="2">
    <citation type="submission" date="1999-03" db="EMBL/GenBank/DDBJ databases">
        <authorList>
            <person name="Shiue Y.-L."/>
            <person name="Caetano A.R."/>
            <person name="Lyons L.A."/>
            <person name="O'Brien S.J."/>
            <person name="Laughlin T.F."/>
            <person name="Murray J.D."/>
            <person name="Bowling A.T."/>
        </authorList>
    </citation>
    <scope>NUCLEOTIDE SEQUENCE [GENOMIC DNA] OF 30-115</scope>
</reference>
<protein>
    <recommendedName>
        <fullName>Parathyroid hormone</fullName>
        <shortName>PTH</shortName>
    </recommendedName>
    <alternativeName>
        <fullName>Parathyrin</fullName>
    </alternativeName>
</protein>
<feature type="signal peptide" evidence="1">
    <location>
        <begin position="1"/>
        <end position="25"/>
    </location>
</feature>
<feature type="propeptide" id="PRO_0000252460" evidence="1">
    <location>
        <begin position="26"/>
        <end position="31"/>
    </location>
</feature>
<feature type="chain" id="PRO_0000252461" description="Parathyroid hormone">
    <location>
        <begin position="32"/>
        <end position="115"/>
    </location>
</feature>
<feature type="region of interest" description="Important for receptor binding" evidence="1">
    <location>
        <begin position="51"/>
        <end position="69"/>
    </location>
</feature>
<feature type="region of interest" description="Disordered" evidence="2">
    <location>
        <begin position="73"/>
        <end position="115"/>
    </location>
</feature>
<feature type="helix" evidence="4">
    <location>
        <begin position="34"/>
        <end position="64"/>
    </location>
</feature>
<accession>Q27IM2</accession>
<accession>Q9N1V0</accession>
<organism>
    <name type="scientific">Equus caballus</name>
    <name type="common">Horse</name>
    <dbReference type="NCBI Taxonomy" id="9796"/>
    <lineage>
        <taxon>Eukaryota</taxon>
        <taxon>Metazoa</taxon>
        <taxon>Chordata</taxon>
        <taxon>Craniata</taxon>
        <taxon>Vertebrata</taxon>
        <taxon>Euteleostomi</taxon>
        <taxon>Mammalia</taxon>
        <taxon>Eutheria</taxon>
        <taxon>Laurasiatheria</taxon>
        <taxon>Perissodactyla</taxon>
        <taxon>Equidae</taxon>
        <taxon>Equus</taxon>
    </lineage>
</organism>
<comment type="function">
    <text evidence="1">Parathyroid hormone elevates calcium level by dissolving the salts in bone and preventing their renal excretion. Acts by binding to its receptor, PTH1R, activating G protein-coupled receptor signaling. Stimulates [1-14C]-2-deoxy-D-glucose (2DG) transport and glycogen synthesis in osteoblastic cells.</text>
</comment>
<comment type="subunit">
    <text evidence="1">Interacts with PTH1R (via N-terminal extracellular domain).</text>
</comment>
<comment type="subcellular location">
    <subcellularLocation>
        <location evidence="1">Secreted</location>
    </subcellularLocation>
</comment>
<comment type="similarity">
    <text evidence="3">Belongs to the parathyroid hormone family.</text>
</comment>
<sequence>MMSAKNMVKVMIVMFAIFLLAKSDGKPVRKRSVSEIQLMHNLGKHLNSVERVEWLRKKLQDVHNFIALGAPIFHRDGGSQRPRKKEDNVLIESHQKSLGEADKADVDVLSKTKSQ</sequence>
<evidence type="ECO:0000250" key="1">
    <source>
        <dbReference type="UniProtKB" id="P01270"/>
    </source>
</evidence>
<evidence type="ECO:0000256" key="2">
    <source>
        <dbReference type="SAM" id="MobiDB-lite"/>
    </source>
</evidence>
<evidence type="ECO:0000305" key="3"/>
<evidence type="ECO:0007829" key="4">
    <source>
        <dbReference type="PDB" id="6FJ3"/>
    </source>
</evidence>
<gene>
    <name type="primary">PTH</name>
</gene>
<keyword id="KW-0002">3D-structure</keyword>
<keyword id="KW-0165">Cleavage on pair of basic residues</keyword>
<keyword id="KW-0372">Hormone</keyword>
<keyword id="KW-1185">Reference proteome</keyword>
<keyword id="KW-0964">Secreted</keyword>
<keyword id="KW-0732">Signal</keyword>
<name>PTHY_HORSE</name>
<dbReference type="EMBL" id="DQ399295">
    <property type="protein sequence ID" value="ABD59340.1"/>
    <property type="molecule type" value="mRNA"/>
</dbReference>
<dbReference type="EMBL" id="AF134233">
    <property type="protein sequence ID" value="AAF62347.1"/>
    <property type="molecule type" value="Genomic_DNA"/>
</dbReference>
<dbReference type="RefSeq" id="NP_001075386.1">
    <property type="nucleotide sequence ID" value="NM_001081917.1"/>
</dbReference>
<dbReference type="PDB" id="6FJ3">
    <property type="method" value="X-ray"/>
    <property type="resolution" value="2.50 A"/>
    <property type="chains" value="B=32-65"/>
</dbReference>
<dbReference type="PDBsum" id="6FJ3"/>
<dbReference type="BMRB" id="Q27IM2"/>
<dbReference type="SMR" id="Q27IM2"/>
<dbReference type="FunCoup" id="Q27IM2">
    <property type="interactions" value="11"/>
</dbReference>
<dbReference type="STRING" id="9796.ENSECAP00000017043"/>
<dbReference type="PaxDb" id="9796-ENSECAP00000017043"/>
<dbReference type="Ensembl" id="ENSECAT00000020748.2">
    <property type="protein sequence ID" value="ENSECAP00000017043.1"/>
    <property type="gene ID" value="ENSECAG00000019608.2"/>
</dbReference>
<dbReference type="GeneID" id="100034104"/>
<dbReference type="KEGG" id="ecb:100034104"/>
<dbReference type="CTD" id="5741"/>
<dbReference type="VGNC" id="VGNC:21998">
    <property type="gene designation" value="PTH"/>
</dbReference>
<dbReference type="GeneTree" id="ENSGT00390000018603"/>
<dbReference type="HOGENOM" id="CLU_164143_0_0_1"/>
<dbReference type="InParanoid" id="Q27IM2"/>
<dbReference type="OMA" id="MKLQDVH"/>
<dbReference type="OrthoDB" id="9890537at2759"/>
<dbReference type="TreeFam" id="TF336197"/>
<dbReference type="Proteomes" id="UP000002281">
    <property type="component" value="Chromosome 7"/>
</dbReference>
<dbReference type="Bgee" id="ENSECAG00000019608">
    <property type="expression patterns" value="Expressed in retina and 3 other cell types or tissues"/>
</dbReference>
<dbReference type="GO" id="GO:0005615">
    <property type="term" value="C:extracellular space"/>
    <property type="evidence" value="ECO:0000318"/>
    <property type="project" value="GO_Central"/>
</dbReference>
<dbReference type="GO" id="GO:0005179">
    <property type="term" value="F:hormone activity"/>
    <property type="evidence" value="ECO:0000318"/>
    <property type="project" value="GO_Central"/>
</dbReference>
<dbReference type="GO" id="GO:0031856">
    <property type="term" value="F:parathyroid hormone receptor binding"/>
    <property type="evidence" value="ECO:0000318"/>
    <property type="project" value="GO_Central"/>
</dbReference>
<dbReference type="GO" id="GO:0051428">
    <property type="term" value="F:peptide hormone receptor binding"/>
    <property type="evidence" value="ECO:0000250"/>
    <property type="project" value="UniProtKB"/>
</dbReference>
<dbReference type="GO" id="GO:0031857">
    <property type="term" value="F:type 1 parathyroid hormone receptor binding"/>
    <property type="evidence" value="ECO:0007669"/>
    <property type="project" value="Ensembl"/>
</dbReference>
<dbReference type="GO" id="GO:0007189">
    <property type="term" value="P:adenylate cyclase-activating G protein-coupled receptor signaling pathway"/>
    <property type="evidence" value="ECO:0007669"/>
    <property type="project" value="Ensembl"/>
</dbReference>
<dbReference type="GO" id="GO:0030282">
    <property type="term" value="P:bone mineralization"/>
    <property type="evidence" value="ECO:0007669"/>
    <property type="project" value="Ensembl"/>
</dbReference>
<dbReference type="GO" id="GO:0007267">
    <property type="term" value="P:cell-cell signaling"/>
    <property type="evidence" value="ECO:0000318"/>
    <property type="project" value="GO_Central"/>
</dbReference>
<dbReference type="GO" id="GO:0048873">
    <property type="term" value="P:homeostasis of number of cells within a tissue"/>
    <property type="evidence" value="ECO:0007669"/>
    <property type="project" value="Ensembl"/>
</dbReference>
<dbReference type="GO" id="GO:0006874">
    <property type="term" value="P:intracellular calcium ion homeostasis"/>
    <property type="evidence" value="ECO:0007669"/>
    <property type="project" value="Ensembl"/>
</dbReference>
<dbReference type="GO" id="GO:0010960">
    <property type="term" value="P:magnesium ion homeostasis"/>
    <property type="evidence" value="ECO:0007669"/>
    <property type="project" value="Ensembl"/>
</dbReference>
<dbReference type="GO" id="GO:0071866">
    <property type="term" value="P:negative regulation of apoptotic process in bone marrow cell"/>
    <property type="evidence" value="ECO:0007669"/>
    <property type="project" value="Ensembl"/>
</dbReference>
<dbReference type="GO" id="GO:0010629">
    <property type="term" value="P:negative regulation of gene expression"/>
    <property type="evidence" value="ECO:0007669"/>
    <property type="project" value="Ensembl"/>
</dbReference>
<dbReference type="GO" id="GO:0055062">
    <property type="term" value="P:phosphate ion homeostasis"/>
    <property type="evidence" value="ECO:0007669"/>
    <property type="project" value="Ensembl"/>
</dbReference>
<dbReference type="GO" id="GO:0030501">
    <property type="term" value="P:positive regulation of bone mineralization"/>
    <property type="evidence" value="ECO:0007669"/>
    <property type="project" value="Ensembl"/>
</dbReference>
<dbReference type="GO" id="GO:0071864">
    <property type="term" value="P:positive regulation of cell proliferation in bone marrow"/>
    <property type="evidence" value="ECO:0007669"/>
    <property type="project" value="Ensembl"/>
</dbReference>
<dbReference type="GO" id="GO:0046326">
    <property type="term" value="P:positive regulation of D-glucose import"/>
    <property type="evidence" value="ECO:0000250"/>
    <property type="project" value="UniProtKB"/>
</dbReference>
<dbReference type="GO" id="GO:0045725">
    <property type="term" value="P:positive regulation of glycogen biosynthetic process"/>
    <property type="evidence" value="ECO:0000250"/>
    <property type="project" value="UniProtKB"/>
</dbReference>
<dbReference type="GO" id="GO:0060732">
    <property type="term" value="P:positive regulation of inositol phosphate biosynthetic process"/>
    <property type="evidence" value="ECO:0007669"/>
    <property type="project" value="Ensembl"/>
</dbReference>
<dbReference type="GO" id="GO:0090290">
    <property type="term" value="P:positive regulation of osteoclast proliferation"/>
    <property type="evidence" value="ECO:0007669"/>
    <property type="project" value="Ensembl"/>
</dbReference>
<dbReference type="GO" id="GO:0009967">
    <property type="term" value="P:positive regulation of signal transduction"/>
    <property type="evidence" value="ECO:0007669"/>
    <property type="project" value="Ensembl"/>
</dbReference>
<dbReference type="GO" id="GO:0045944">
    <property type="term" value="P:positive regulation of transcription by RNA polymerase II"/>
    <property type="evidence" value="ECO:0007669"/>
    <property type="project" value="Ensembl"/>
</dbReference>
<dbReference type="GO" id="GO:0006366">
    <property type="term" value="P:transcription by RNA polymerase II"/>
    <property type="evidence" value="ECO:0007669"/>
    <property type="project" value="Ensembl"/>
</dbReference>
<dbReference type="InterPro" id="IPR003625">
    <property type="entry name" value="PTH"/>
</dbReference>
<dbReference type="InterPro" id="IPR001415">
    <property type="entry name" value="PTH/PTH-rel"/>
</dbReference>
<dbReference type="PANTHER" id="PTHR10541">
    <property type="entry name" value="PARATHYROID HORMONE"/>
    <property type="match status" value="1"/>
</dbReference>
<dbReference type="PANTHER" id="PTHR10541:SF2">
    <property type="entry name" value="PARATHYROID HORMONE"/>
    <property type="match status" value="1"/>
</dbReference>
<dbReference type="Pfam" id="PF01279">
    <property type="entry name" value="Parathyroid"/>
    <property type="match status" value="1"/>
</dbReference>
<dbReference type="PIRSF" id="PIRSF001832">
    <property type="entry name" value="PTH"/>
    <property type="match status" value="1"/>
</dbReference>
<dbReference type="SMART" id="SM00087">
    <property type="entry name" value="PTH"/>
    <property type="match status" value="1"/>
</dbReference>
<dbReference type="PROSITE" id="PS00335">
    <property type="entry name" value="PARATHYROID"/>
    <property type="match status" value="1"/>
</dbReference>
<proteinExistence type="evidence at protein level"/>